<organism>
    <name type="scientific">Cervus nippon nippon</name>
    <name type="common">Japanese sika deer</name>
    <dbReference type="NCBI Taxonomy" id="92867"/>
    <lineage>
        <taxon>Eukaryota</taxon>
        <taxon>Metazoa</taxon>
        <taxon>Chordata</taxon>
        <taxon>Craniata</taxon>
        <taxon>Vertebrata</taxon>
        <taxon>Euteleostomi</taxon>
        <taxon>Mammalia</taxon>
        <taxon>Eutheria</taxon>
        <taxon>Laurasiatheria</taxon>
        <taxon>Artiodactyla</taxon>
        <taxon>Ruminantia</taxon>
        <taxon>Pecora</taxon>
        <taxon>Cervidae</taxon>
        <taxon>Cervinae</taxon>
        <taxon>Cervus</taxon>
    </lineage>
</organism>
<accession>P82047</accession>
<name>CYB_CERNN</name>
<geneLocation type="mitochondrion"/>
<keyword id="KW-0249">Electron transport</keyword>
<keyword id="KW-0349">Heme</keyword>
<keyword id="KW-0408">Iron</keyword>
<keyword id="KW-0472">Membrane</keyword>
<keyword id="KW-0479">Metal-binding</keyword>
<keyword id="KW-0496">Mitochondrion</keyword>
<keyword id="KW-0999">Mitochondrion inner membrane</keyword>
<keyword id="KW-0679">Respiratory chain</keyword>
<keyword id="KW-0812">Transmembrane</keyword>
<keyword id="KW-1133">Transmembrane helix</keyword>
<keyword id="KW-0813">Transport</keyword>
<keyword id="KW-0830">Ubiquinone</keyword>
<evidence type="ECO:0000250" key="1"/>
<evidence type="ECO:0000250" key="2">
    <source>
        <dbReference type="UniProtKB" id="P00157"/>
    </source>
</evidence>
<evidence type="ECO:0000255" key="3">
    <source>
        <dbReference type="PROSITE-ProRule" id="PRU00967"/>
    </source>
</evidence>
<proteinExistence type="inferred from homology"/>
<protein>
    <recommendedName>
        <fullName>Cytochrome b</fullName>
    </recommendedName>
    <alternativeName>
        <fullName>Complex III subunit 3</fullName>
    </alternativeName>
    <alternativeName>
        <fullName>Complex III subunit III</fullName>
    </alternativeName>
    <alternativeName>
        <fullName>Cytochrome b-c1 complex subunit 3</fullName>
    </alternativeName>
    <alternativeName>
        <fullName>Ubiquinol-cytochrome-c reductase complex cytochrome b subunit</fullName>
    </alternativeName>
</protein>
<comment type="function">
    <text evidence="2">Component of the ubiquinol-cytochrome c reductase complex (complex III or cytochrome b-c1 complex) that is part of the mitochondrial respiratory chain. The b-c1 complex mediates electron transfer from ubiquinol to cytochrome c. Contributes to the generation of a proton gradient across the mitochondrial membrane that is then used for ATP synthesis.</text>
</comment>
<comment type="cofactor">
    <cofactor evidence="2">
        <name>heme</name>
        <dbReference type="ChEBI" id="CHEBI:30413"/>
    </cofactor>
    <text evidence="2">Binds 2 heme groups non-covalently.</text>
</comment>
<comment type="subunit">
    <text evidence="2">The cytochrome bc1 complex contains 11 subunits: 3 respiratory subunits (MT-CYB, CYC1 and UQCRFS1), 2 core proteins (UQCRC1 and UQCRC2) and 6 low-molecular weight proteins (UQCRH/QCR6, UQCRB/QCR7, UQCRQ/QCR8, UQCR10/QCR9, UQCR11/QCR10 and a cleavage product of UQCRFS1). This cytochrome bc1 complex then forms a dimer.</text>
</comment>
<comment type="subcellular location">
    <subcellularLocation>
        <location evidence="2">Mitochondrion inner membrane</location>
        <topology evidence="2">Multi-pass membrane protein</topology>
    </subcellularLocation>
</comment>
<comment type="miscellaneous">
    <text evidence="1">Heme 1 (or BL or b562) is low-potential and absorbs at about 562 nm, and heme 2 (or BH or b566) is high-potential and absorbs at about 566 nm.</text>
</comment>
<comment type="similarity">
    <text evidence="3">Belongs to the cytochrome b family.</text>
</comment>
<comment type="caution">
    <text evidence="2">The full-length protein contains only eight transmembrane helices, not nine as predicted by bioinformatics tools.</text>
</comment>
<gene>
    <name type="primary">MT-CYB</name>
    <name type="synonym">COB</name>
    <name type="synonym">CYTB</name>
    <name type="synonym">MTCYB</name>
</gene>
<sequence length="149" mass="16872">GILLLVLFLMSLVLFAPDLLGDPDNYTPANPLNTPPHIKPEWYFLFAYAILRSIPNKLGGVLALVSSILILILMPLLHTSKQRSMMFRPFSQCLFWILVADLLTLTWIGGQPVEYPFIIIGQLASVLYFFIILVLMPITSTIENNLLKW</sequence>
<reference key="1">
    <citation type="journal article" date="1999" name="Mol. Phylogenet. Evol.">
        <title>A mitochondrial control region and cytochrome b phylogeny of sika deer (Cervus nippon) and report of tandem repeats in the control region.</title>
        <authorList>
            <person name="Cook C.E."/>
            <person name="Wang Y."/>
            <person name="Sensabaugh G."/>
        </authorList>
    </citation>
    <scope>NUCLEOTIDE SEQUENCE [GENOMIC DNA]</scope>
    <source>
        <tissue>Muscle</tissue>
    </source>
</reference>
<feature type="chain" id="PRO_0000060763" description="Cytochrome b">
    <location>
        <begin position="1" status="less than"/>
        <end position="149"/>
    </location>
</feature>
<feature type="transmembrane region" description="Helical" evidence="2">
    <location>
        <begin position="1" status="less than"/>
        <end position="16"/>
    </location>
</feature>
<feature type="transmembrane region" description="Helical" evidence="2">
    <location>
        <begin position="58"/>
        <end position="78"/>
    </location>
</feature>
<feature type="transmembrane region" description="Helical" evidence="2">
    <location>
        <begin position="90"/>
        <end position="110"/>
    </location>
</feature>
<feature type="transmembrane region" description="Helical" evidence="2">
    <location>
        <begin position="117"/>
        <end position="137"/>
    </location>
</feature>
<feature type="non-terminal residue">
    <location>
        <position position="1"/>
    </location>
</feature>
<dbReference type="EMBL" id="AF129417">
    <property type="protein sequence ID" value="AAD31813.1"/>
    <property type="molecule type" value="Genomic_DNA"/>
</dbReference>
<dbReference type="SMR" id="P82047"/>
<dbReference type="GO" id="GO:0005743">
    <property type="term" value="C:mitochondrial inner membrane"/>
    <property type="evidence" value="ECO:0007669"/>
    <property type="project" value="UniProtKB-SubCell"/>
</dbReference>
<dbReference type="GO" id="GO:0046872">
    <property type="term" value="F:metal ion binding"/>
    <property type="evidence" value="ECO:0007669"/>
    <property type="project" value="UniProtKB-KW"/>
</dbReference>
<dbReference type="GO" id="GO:0008121">
    <property type="term" value="F:ubiquinol-cytochrome-c reductase activity"/>
    <property type="evidence" value="ECO:0007669"/>
    <property type="project" value="TreeGrafter"/>
</dbReference>
<dbReference type="GO" id="GO:0006122">
    <property type="term" value="P:mitochondrial electron transport, ubiquinol to cytochrome c"/>
    <property type="evidence" value="ECO:0007669"/>
    <property type="project" value="TreeGrafter"/>
</dbReference>
<dbReference type="CDD" id="cd00290">
    <property type="entry name" value="cytochrome_b_C"/>
    <property type="match status" value="1"/>
</dbReference>
<dbReference type="Gene3D" id="1.20.810.10">
    <property type="entry name" value="Cytochrome Bc1 Complex, Chain C"/>
    <property type="match status" value="1"/>
</dbReference>
<dbReference type="InterPro" id="IPR005798">
    <property type="entry name" value="Cyt_b/b6_C"/>
</dbReference>
<dbReference type="InterPro" id="IPR036150">
    <property type="entry name" value="Cyt_b/b6_C_sf"/>
</dbReference>
<dbReference type="InterPro" id="IPR027387">
    <property type="entry name" value="Cytb/b6-like_sf"/>
</dbReference>
<dbReference type="InterPro" id="IPR048260">
    <property type="entry name" value="Cytochrome_b_C_euk/bac"/>
</dbReference>
<dbReference type="PANTHER" id="PTHR19271">
    <property type="entry name" value="CYTOCHROME B"/>
    <property type="match status" value="1"/>
</dbReference>
<dbReference type="PANTHER" id="PTHR19271:SF16">
    <property type="entry name" value="CYTOCHROME B"/>
    <property type="match status" value="1"/>
</dbReference>
<dbReference type="Pfam" id="PF00032">
    <property type="entry name" value="Cytochrom_B_C"/>
    <property type="match status" value="1"/>
</dbReference>
<dbReference type="SUPFAM" id="SSF81648">
    <property type="entry name" value="a domain/subunit of cytochrome bc1 complex (Ubiquinol-cytochrome c reductase)"/>
    <property type="match status" value="1"/>
</dbReference>
<dbReference type="PROSITE" id="PS51003">
    <property type="entry name" value="CYTB_CTER"/>
    <property type="match status" value="1"/>
</dbReference>